<sequence length="298" mass="33309">MDLMSALSLGELALSFSRVPLFPVFDLSYFIVSIIYLKYEPGAVELSRRHPVASWLCAMLHCFGSYILADLLLGEPIIDYFSNSSSILLASGVWYLIFFCPLDLFYKCVCFLPVKLIFVAMKEVVRVRKIAVGIHHAHHHYHHGWFIMIATGWVKGSGVALLSNVEQLLRGVWKPETNEILHMSFPTKASLYGAILFTLQQTRWLPVSKASLIFVFTMFMVSCKVFLTATHSHSSPFDILEGYICPVLFGATWGGDHHHDNHGAPHGMGLGTQHSGLPAKAKEELGEGSRKKKTKKAD</sequence>
<proteinExistence type="evidence at protein level"/>
<accession>Q3TMP8</accession>
<accession>A5A6S4</accession>
<accession>A7LBB7</accession>
<accession>Q3TZB9</accession>
<accession>Q91WL2</accession>
<organism>
    <name type="scientific">Mus musculus</name>
    <name type="common">Mouse</name>
    <dbReference type="NCBI Taxonomy" id="10090"/>
    <lineage>
        <taxon>Eukaryota</taxon>
        <taxon>Metazoa</taxon>
        <taxon>Chordata</taxon>
        <taxon>Craniata</taxon>
        <taxon>Vertebrata</taxon>
        <taxon>Euteleostomi</taxon>
        <taxon>Mammalia</taxon>
        <taxon>Eutheria</taxon>
        <taxon>Euarchontoglires</taxon>
        <taxon>Glires</taxon>
        <taxon>Rodentia</taxon>
        <taxon>Myomorpha</taxon>
        <taxon>Muroidea</taxon>
        <taxon>Muridae</taxon>
        <taxon>Murinae</taxon>
        <taxon>Mus</taxon>
        <taxon>Mus</taxon>
    </lineage>
</organism>
<reference key="1">
    <citation type="journal article" date="2007" name="Nature">
        <title>TRIC channels are essential for Ca2+ handling in intracellular stores.</title>
        <authorList>
            <person name="Yazawa M."/>
            <person name="Ferrante C."/>
            <person name="Feng J."/>
            <person name="Mio K."/>
            <person name="Ogura T."/>
            <person name="Zhang M."/>
            <person name="Lin P.-H."/>
            <person name="Pan Z."/>
            <person name="Komazaki S."/>
            <person name="Kato K."/>
            <person name="Nishi M."/>
            <person name="Zhao X."/>
            <person name="Weisleder N."/>
            <person name="Sato C."/>
            <person name="Ma J."/>
            <person name="Takeshima H."/>
        </authorList>
    </citation>
    <scope>NUCLEOTIDE SEQUENCE [MRNA]</scope>
    <scope>TOPOLOGY</scope>
    <scope>TISSUE SPECIFICITY</scope>
    <scope>DISRUPTION PHENOTYPE</scope>
</reference>
<reference key="2">
    <citation type="submission" date="2007-06" db="EMBL/GenBank/DDBJ databases">
        <title>SPR-27 is a novel component of the supramolecular signaling complex involved in skeletal muscle excitation-contraction coupling.</title>
        <authorList>
            <person name="Bleunven C."/>
            <person name="Treves S."/>
            <person name="Leo E."/>
            <person name="Ronjat M."/>
            <person name="De Waard M."/>
            <person name="Kern G."/>
            <person name="Flucher B.E."/>
            <person name="Zorzato F."/>
        </authorList>
    </citation>
    <scope>NUCLEOTIDE SEQUENCE [MRNA]</scope>
    <source>
        <strain>C57BL/6J</strain>
    </source>
</reference>
<reference key="3">
    <citation type="journal article" date="2005" name="Science">
        <title>The transcriptional landscape of the mammalian genome.</title>
        <authorList>
            <person name="Carninci P."/>
            <person name="Kasukawa T."/>
            <person name="Katayama S."/>
            <person name="Gough J."/>
            <person name="Frith M.C."/>
            <person name="Maeda N."/>
            <person name="Oyama R."/>
            <person name="Ravasi T."/>
            <person name="Lenhard B."/>
            <person name="Wells C."/>
            <person name="Kodzius R."/>
            <person name="Shimokawa K."/>
            <person name="Bajic V.B."/>
            <person name="Brenner S.E."/>
            <person name="Batalov S."/>
            <person name="Forrest A.R."/>
            <person name="Zavolan M."/>
            <person name="Davis M.J."/>
            <person name="Wilming L.G."/>
            <person name="Aidinis V."/>
            <person name="Allen J.E."/>
            <person name="Ambesi-Impiombato A."/>
            <person name="Apweiler R."/>
            <person name="Aturaliya R.N."/>
            <person name="Bailey T.L."/>
            <person name="Bansal M."/>
            <person name="Baxter L."/>
            <person name="Beisel K.W."/>
            <person name="Bersano T."/>
            <person name="Bono H."/>
            <person name="Chalk A.M."/>
            <person name="Chiu K.P."/>
            <person name="Choudhary V."/>
            <person name="Christoffels A."/>
            <person name="Clutterbuck D.R."/>
            <person name="Crowe M.L."/>
            <person name="Dalla E."/>
            <person name="Dalrymple B.P."/>
            <person name="de Bono B."/>
            <person name="Della Gatta G."/>
            <person name="di Bernardo D."/>
            <person name="Down T."/>
            <person name="Engstrom P."/>
            <person name="Fagiolini M."/>
            <person name="Faulkner G."/>
            <person name="Fletcher C.F."/>
            <person name="Fukushima T."/>
            <person name="Furuno M."/>
            <person name="Futaki S."/>
            <person name="Gariboldi M."/>
            <person name="Georgii-Hemming P."/>
            <person name="Gingeras T.R."/>
            <person name="Gojobori T."/>
            <person name="Green R.E."/>
            <person name="Gustincich S."/>
            <person name="Harbers M."/>
            <person name="Hayashi Y."/>
            <person name="Hensch T.K."/>
            <person name="Hirokawa N."/>
            <person name="Hill D."/>
            <person name="Huminiecki L."/>
            <person name="Iacono M."/>
            <person name="Ikeo K."/>
            <person name="Iwama A."/>
            <person name="Ishikawa T."/>
            <person name="Jakt M."/>
            <person name="Kanapin A."/>
            <person name="Katoh M."/>
            <person name="Kawasawa Y."/>
            <person name="Kelso J."/>
            <person name="Kitamura H."/>
            <person name="Kitano H."/>
            <person name="Kollias G."/>
            <person name="Krishnan S.P."/>
            <person name="Kruger A."/>
            <person name="Kummerfeld S.K."/>
            <person name="Kurochkin I.V."/>
            <person name="Lareau L.F."/>
            <person name="Lazarevic D."/>
            <person name="Lipovich L."/>
            <person name="Liu J."/>
            <person name="Liuni S."/>
            <person name="McWilliam S."/>
            <person name="Madan Babu M."/>
            <person name="Madera M."/>
            <person name="Marchionni L."/>
            <person name="Matsuda H."/>
            <person name="Matsuzawa S."/>
            <person name="Miki H."/>
            <person name="Mignone F."/>
            <person name="Miyake S."/>
            <person name="Morris K."/>
            <person name="Mottagui-Tabar S."/>
            <person name="Mulder N."/>
            <person name="Nakano N."/>
            <person name="Nakauchi H."/>
            <person name="Ng P."/>
            <person name="Nilsson R."/>
            <person name="Nishiguchi S."/>
            <person name="Nishikawa S."/>
            <person name="Nori F."/>
            <person name="Ohara O."/>
            <person name="Okazaki Y."/>
            <person name="Orlando V."/>
            <person name="Pang K.C."/>
            <person name="Pavan W.J."/>
            <person name="Pavesi G."/>
            <person name="Pesole G."/>
            <person name="Petrovsky N."/>
            <person name="Piazza S."/>
            <person name="Reed J."/>
            <person name="Reid J.F."/>
            <person name="Ring B.Z."/>
            <person name="Ringwald M."/>
            <person name="Rost B."/>
            <person name="Ruan Y."/>
            <person name="Salzberg S.L."/>
            <person name="Sandelin A."/>
            <person name="Schneider C."/>
            <person name="Schoenbach C."/>
            <person name="Sekiguchi K."/>
            <person name="Semple C.A."/>
            <person name="Seno S."/>
            <person name="Sessa L."/>
            <person name="Sheng Y."/>
            <person name="Shibata Y."/>
            <person name="Shimada H."/>
            <person name="Shimada K."/>
            <person name="Silva D."/>
            <person name="Sinclair B."/>
            <person name="Sperling S."/>
            <person name="Stupka E."/>
            <person name="Sugiura K."/>
            <person name="Sultana R."/>
            <person name="Takenaka Y."/>
            <person name="Taki K."/>
            <person name="Tammoja K."/>
            <person name="Tan S.L."/>
            <person name="Tang S."/>
            <person name="Taylor M.S."/>
            <person name="Tegner J."/>
            <person name="Teichmann S.A."/>
            <person name="Ueda H.R."/>
            <person name="van Nimwegen E."/>
            <person name="Verardo R."/>
            <person name="Wei C.L."/>
            <person name="Yagi K."/>
            <person name="Yamanishi H."/>
            <person name="Zabarovsky E."/>
            <person name="Zhu S."/>
            <person name="Zimmer A."/>
            <person name="Hide W."/>
            <person name="Bult C."/>
            <person name="Grimmond S.M."/>
            <person name="Teasdale R.D."/>
            <person name="Liu E.T."/>
            <person name="Brusic V."/>
            <person name="Quackenbush J."/>
            <person name="Wahlestedt C."/>
            <person name="Mattick J.S."/>
            <person name="Hume D.A."/>
            <person name="Kai C."/>
            <person name="Sasaki D."/>
            <person name="Tomaru Y."/>
            <person name="Fukuda S."/>
            <person name="Kanamori-Katayama M."/>
            <person name="Suzuki M."/>
            <person name="Aoki J."/>
            <person name="Arakawa T."/>
            <person name="Iida J."/>
            <person name="Imamura K."/>
            <person name="Itoh M."/>
            <person name="Kato T."/>
            <person name="Kawaji H."/>
            <person name="Kawagashira N."/>
            <person name="Kawashima T."/>
            <person name="Kojima M."/>
            <person name="Kondo S."/>
            <person name="Konno H."/>
            <person name="Nakano K."/>
            <person name="Ninomiya N."/>
            <person name="Nishio T."/>
            <person name="Okada M."/>
            <person name="Plessy C."/>
            <person name="Shibata K."/>
            <person name="Shiraki T."/>
            <person name="Suzuki S."/>
            <person name="Tagami M."/>
            <person name="Waki K."/>
            <person name="Watahiki A."/>
            <person name="Okamura-Oho Y."/>
            <person name="Suzuki H."/>
            <person name="Kawai J."/>
            <person name="Hayashizaki Y."/>
        </authorList>
    </citation>
    <scope>NUCLEOTIDE SEQUENCE [LARGE SCALE MRNA]</scope>
    <source>
        <strain>C57BL/6J</strain>
        <tissue>Cerebellum</tissue>
        <tissue>Inner ear</tissue>
    </source>
</reference>
<reference key="4">
    <citation type="journal article" date="2004" name="Genome Res.">
        <title>The status, quality, and expansion of the NIH full-length cDNA project: the Mammalian Gene Collection (MGC).</title>
        <authorList>
            <consortium name="The MGC Project Team"/>
        </authorList>
    </citation>
    <scope>NUCLEOTIDE SEQUENCE [LARGE SCALE MRNA]</scope>
    <source>
        <tissue>Eye</tissue>
    </source>
</reference>
<reference key="5">
    <citation type="journal article" date="2010" name="Cell">
        <title>A tissue-specific atlas of mouse protein phosphorylation and expression.</title>
        <authorList>
            <person name="Huttlin E.L."/>
            <person name="Jedrychowski M.P."/>
            <person name="Elias J.E."/>
            <person name="Goswami T."/>
            <person name="Rad R."/>
            <person name="Beausoleil S.A."/>
            <person name="Villen J."/>
            <person name="Haas W."/>
            <person name="Sowa M.E."/>
            <person name="Gygi S.P."/>
        </authorList>
    </citation>
    <scope>IDENTIFICATION BY MASS SPECTROMETRY [LARGE SCALE ANALYSIS]</scope>
    <source>
        <tissue>Brain</tissue>
        <tissue>Heart</tissue>
    </source>
</reference>
<protein>
    <recommendedName>
        <fullName>Trimeric intracellular cation channel type A</fullName>
        <shortName>TRIC-A</shortName>
        <shortName>TRICA</shortName>
    </recommendedName>
    <alternativeName>
        <fullName>27 kDa sarcoplasmic reticulum protein</fullName>
    </alternativeName>
    <alternativeName>
        <fullName>Mitsugumin-33A</fullName>
    </alternativeName>
    <alternativeName>
        <fullName>SPR-27</fullName>
    </alternativeName>
    <alternativeName>
        <fullName>Transmembrane protein 38A</fullName>
    </alternativeName>
</protein>
<dbReference type="EMBL" id="AB261158">
    <property type="protein sequence ID" value="BAF62541.1"/>
    <property type="molecule type" value="mRNA"/>
</dbReference>
<dbReference type="EMBL" id="EF988666">
    <property type="protein sequence ID" value="ABS17665.1"/>
    <property type="molecule type" value="mRNA"/>
</dbReference>
<dbReference type="EMBL" id="AK157969">
    <property type="protein sequence ID" value="BAE34290.1"/>
    <property type="molecule type" value="mRNA"/>
</dbReference>
<dbReference type="EMBL" id="AK165818">
    <property type="protein sequence ID" value="BAE38393.1"/>
    <property type="molecule type" value="mRNA"/>
</dbReference>
<dbReference type="EMBL" id="BC014728">
    <property type="protein sequence ID" value="AAH14728.1"/>
    <property type="molecule type" value="mRNA"/>
</dbReference>
<dbReference type="EMBL" id="BC024788">
    <property type="protein sequence ID" value="AAH24788.1"/>
    <property type="molecule type" value="mRNA"/>
</dbReference>
<dbReference type="CCDS" id="CCDS22417.1"/>
<dbReference type="RefSeq" id="NP_653117.1">
    <property type="nucleotide sequence ID" value="NM_144534.2"/>
</dbReference>
<dbReference type="SMR" id="Q3TMP8"/>
<dbReference type="FunCoup" id="Q3TMP8">
    <property type="interactions" value="825"/>
</dbReference>
<dbReference type="STRING" id="10090.ENSMUSP00000034244"/>
<dbReference type="TCDB" id="1.A.62.1.1">
    <property type="family name" value="the homotrimeric cation channel (tric) family"/>
</dbReference>
<dbReference type="GlyGen" id="Q3TMP8">
    <property type="glycosylation" value="1 site, 1 O-linked glycan (1 site)"/>
</dbReference>
<dbReference type="iPTMnet" id="Q3TMP8"/>
<dbReference type="PhosphoSitePlus" id="Q3TMP8"/>
<dbReference type="jPOST" id="Q3TMP8"/>
<dbReference type="PaxDb" id="10090-ENSMUSP00000034244"/>
<dbReference type="PeptideAtlas" id="Q3TMP8"/>
<dbReference type="ProteomicsDB" id="259227"/>
<dbReference type="Antibodypedia" id="27435">
    <property type="antibodies" value="131 antibodies from 26 providers"/>
</dbReference>
<dbReference type="DNASU" id="74166"/>
<dbReference type="Ensembl" id="ENSMUST00000034244.9">
    <property type="protein sequence ID" value="ENSMUSP00000034244.8"/>
    <property type="gene ID" value="ENSMUSG00000031791.9"/>
</dbReference>
<dbReference type="GeneID" id="74166"/>
<dbReference type="KEGG" id="mmu:74166"/>
<dbReference type="UCSC" id="uc009mgi.2">
    <property type="organism name" value="mouse"/>
</dbReference>
<dbReference type="AGR" id="MGI:1921416"/>
<dbReference type="CTD" id="79041"/>
<dbReference type="MGI" id="MGI:1921416">
    <property type="gene designation" value="Tmem38a"/>
</dbReference>
<dbReference type="VEuPathDB" id="HostDB:ENSMUSG00000031791"/>
<dbReference type="eggNOG" id="KOG3944">
    <property type="taxonomic scope" value="Eukaryota"/>
</dbReference>
<dbReference type="GeneTree" id="ENSGT00390000018845"/>
<dbReference type="HOGENOM" id="CLU_076376_0_1_1"/>
<dbReference type="InParanoid" id="Q3TMP8"/>
<dbReference type="OMA" id="FSKMAMF"/>
<dbReference type="OrthoDB" id="195817at2759"/>
<dbReference type="PhylomeDB" id="Q3TMP8"/>
<dbReference type="TreeFam" id="TF313483"/>
<dbReference type="BioGRID-ORCS" id="74166">
    <property type="hits" value="1 hit in 77 CRISPR screens"/>
</dbReference>
<dbReference type="PRO" id="PR:Q3TMP8"/>
<dbReference type="Proteomes" id="UP000000589">
    <property type="component" value="Chromosome 8"/>
</dbReference>
<dbReference type="RNAct" id="Q3TMP8">
    <property type="molecule type" value="protein"/>
</dbReference>
<dbReference type="Bgee" id="ENSMUSG00000031791">
    <property type="expression patterns" value="Expressed in interventricular septum and 237 other cell types or tissues"/>
</dbReference>
<dbReference type="ExpressionAtlas" id="Q3TMP8">
    <property type="expression patterns" value="baseline and differential"/>
</dbReference>
<dbReference type="GO" id="GO:0031965">
    <property type="term" value="C:nuclear membrane"/>
    <property type="evidence" value="ECO:0000314"/>
    <property type="project" value="MGI"/>
</dbReference>
<dbReference type="GO" id="GO:0016529">
    <property type="term" value="C:sarcoplasmic reticulum"/>
    <property type="evidence" value="ECO:0000314"/>
    <property type="project" value="MGI"/>
</dbReference>
<dbReference type="GO" id="GO:0033017">
    <property type="term" value="C:sarcoplasmic reticulum membrane"/>
    <property type="evidence" value="ECO:0000250"/>
    <property type="project" value="UniProtKB"/>
</dbReference>
<dbReference type="GO" id="GO:0015269">
    <property type="term" value="F:calcium-activated potassium channel activity"/>
    <property type="evidence" value="ECO:0000304"/>
    <property type="project" value="BHF-UCL"/>
</dbReference>
<dbReference type="GO" id="GO:0042802">
    <property type="term" value="F:identical protein binding"/>
    <property type="evidence" value="ECO:0000353"/>
    <property type="project" value="MGI"/>
</dbReference>
<dbReference type="GO" id="GO:0046872">
    <property type="term" value="F:metal ion binding"/>
    <property type="evidence" value="ECO:0007669"/>
    <property type="project" value="UniProtKB-KW"/>
</dbReference>
<dbReference type="GO" id="GO:0005267">
    <property type="term" value="F:potassium channel activity"/>
    <property type="evidence" value="ECO:0000314"/>
    <property type="project" value="MGI"/>
</dbReference>
<dbReference type="GO" id="GO:0071313">
    <property type="term" value="P:cellular response to caffeine"/>
    <property type="evidence" value="ECO:0000316"/>
    <property type="project" value="MGI"/>
</dbReference>
<dbReference type="GO" id="GO:0007029">
    <property type="term" value="P:endoplasmic reticulum organization"/>
    <property type="evidence" value="ECO:0000316"/>
    <property type="project" value="MGI"/>
</dbReference>
<dbReference type="GO" id="GO:0098662">
    <property type="term" value="P:inorganic cation transmembrane transport"/>
    <property type="evidence" value="ECO:0000314"/>
    <property type="project" value="MGI"/>
</dbReference>
<dbReference type="GO" id="GO:0071805">
    <property type="term" value="P:potassium ion transmembrane transport"/>
    <property type="evidence" value="ECO:0000314"/>
    <property type="project" value="MGI"/>
</dbReference>
<dbReference type="GO" id="GO:0010881">
    <property type="term" value="P:regulation of cardiac muscle contraction by regulation of the release of sequestered calcium ion"/>
    <property type="evidence" value="ECO:0000316"/>
    <property type="project" value="MGI"/>
</dbReference>
<dbReference type="GO" id="GO:0051279">
    <property type="term" value="P:regulation of release of sequestered calcium ion into cytosol"/>
    <property type="evidence" value="ECO:0000250"/>
    <property type="project" value="UniProtKB"/>
</dbReference>
<dbReference type="GO" id="GO:0014808">
    <property type="term" value="P:release of sequestered calcium ion into cytosol by sarcoplasmic reticulum"/>
    <property type="evidence" value="ECO:0000316"/>
    <property type="project" value="MGI"/>
</dbReference>
<dbReference type="InterPro" id="IPR007866">
    <property type="entry name" value="TRIC_channel"/>
</dbReference>
<dbReference type="PANTHER" id="PTHR12454">
    <property type="entry name" value="TRIMERIC INTRACELLULAR CATION CHANNEL"/>
    <property type="match status" value="1"/>
</dbReference>
<dbReference type="PANTHER" id="PTHR12454:SF3">
    <property type="entry name" value="TRIMERIC INTRACELLULAR CATION CHANNEL TYPE A"/>
    <property type="match status" value="1"/>
</dbReference>
<dbReference type="Pfam" id="PF05197">
    <property type="entry name" value="TRIC"/>
    <property type="match status" value="1"/>
</dbReference>
<name>TM38A_MOUSE</name>
<gene>
    <name type="primary">Tmem38a</name>
</gene>
<comment type="function">
    <text evidence="1">Intracellular monovalent cation channel required for maintenance of rapid intracellular calcium release. Acts as a potassium counter-ion channel that functions in synchronization with calcium release from intracellular stores. Opened by a change of voltage within the sarcoplasmic reticulum lumen.</text>
</comment>
<comment type="catalytic activity">
    <reaction evidence="1">
        <text>K(+)(in) = K(+)(out)</text>
        <dbReference type="Rhea" id="RHEA:29463"/>
        <dbReference type="ChEBI" id="CHEBI:29103"/>
    </reaction>
</comment>
<comment type="activity regulation">
    <text evidence="1">Channel activity is activated by a change of voltage within the sarcoplasmic reticulum lumen and blocked by luminal high Ca(2+) levels.</text>
</comment>
<comment type="subunit">
    <text evidence="1">Homotrimer; conformation seems to be controled by binding to diacylglycerol (DAG).</text>
</comment>
<comment type="subcellular location">
    <subcellularLocation>
        <location evidence="1">Sarcoplasmic reticulum membrane</location>
        <topology evidence="1">Multi-pass membrane protein</topology>
    </subcellularLocation>
    <subcellularLocation>
        <location evidence="1">Nucleus membrane</location>
    </subcellularLocation>
</comment>
<comment type="tissue specificity">
    <text evidence="6">Expressed at high levels in heart and striated muscle. Also detected in brain, lung and kidney.</text>
</comment>
<comment type="disruption phenotype">
    <text evidence="6">Mice are viable. Mice lacking Tmem38a and Tmem38b show a weak heartbeat at E9.5 followed by loss of cardiomyocyte viability and embryonic lethality around 10.5 dpc.</text>
</comment>
<comment type="similarity">
    <text evidence="7">Belongs to the TMEM38 family.</text>
</comment>
<keyword id="KW-0106">Calcium</keyword>
<keyword id="KW-0407">Ion channel</keyword>
<keyword id="KW-0406">Ion transport</keyword>
<keyword id="KW-0472">Membrane</keyword>
<keyword id="KW-0479">Metal-binding</keyword>
<keyword id="KW-0539">Nucleus</keyword>
<keyword id="KW-0630">Potassium</keyword>
<keyword id="KW-0631">Potassium channel</keyword>
<keyword id="KW-0633">Potassium transport</keyword>
<keyword id="KW-1185">Reference proteome</keyword>
<keyword id="KW-0703">Sarcoplasmic reticulum</keyword>
<keyword id="KW-0812">Transmembrane</keyword>
<keyword id="KW-1133">Transmembrane helix</keyword>
<keyword id="KW-0813">Transport</keyword>
<evidence type="ECO:0000250" key="1">
    <source>
        <dbReference type="UniProtKB" id="A5A6S6"/>
    </source>
</evidence>
<evidence type="ECO:0000250" key="2">
    <source>
        <dbReference type="UniProtKB" id="Q5ZK43"/>
    </source>
</evidence>
<evidence type="ECO:0000250" key="3">
    <source>
        <dbReference type="UniProtKB" id="Q9NA73"/>
    </source>
</evidence>
<evidence type="ECO:0000255" key="4"/>
<evidence type="ECO:0000256" key="5">
    <source>
        <dbReference type="SAM" id="MobiDB-lite"/>
    </source>
</evidence>
<evidence type="ECO:0000269" key="6">
    <source>
    </source>
</evidence>
<evidence type="ECO:0000305" key="7"/>
<feature type="chain" id="PRO_0000271069" description="Trimeric intracellular cation channel type A">
    <location>
        <begin position="1"/>
        <end position="298"/>
    </location>
</feature>
<feature type="topological domain" description="Lumenal" evidence="7">
    <location>
        <begin position="1"/>
        <end position="18"/>
    </location>
</feature>
<feature type="transmembrane region" description="Helical;Name=1" evidence="4">
    <location>
        <begin position="19"/>
        <end position="39"/>
    </location>
</feature>
<feature type="topological domain" description="Cytoplasmic" evidence="7">
    <location>
        <begin position="40"/>
        <end position="51"/>
    </location>
</feature>
<feature type="transmembrane region" description="Helical;Name=2" evidence="4">
    <location>
        <begin position="52"/>
        <end position="72"/>
    </location>
</feature>
<feature type="topological domain" description="Lumenal" evidence="7">
    <location>
        <begin position="73"/>
        <end position="85"/>
    </location>
</feature>
<feature type="transmembrane region" description="Helical;Name=3" evidence="4">
    <location>
        <begin position="86"/>
        <end position="106"/>
    </location>
</feature>
<feature type="topological domain" description="Cytoplasmic" evidence="7">
    <location>
        <begin position="107"/>
        <end position="144"/>
    </location>
</feature>
<feature type="transmembrane region" description="Helical;Name=4" evidence="4">
    <location>
        <begin position="145"/>
        <end position="165"/>
    </location>
</feature>
<feature type="topological domain" description="Lumenal" evidence="7">
    <location>
        <begin position="166"/>
        <end position="178"/>
    </location>
</feature>
<feature type="transmembrane region" description="Helical;Name=5" evidence="4">
    <location>
        <begin position="179"/>
        <end position="199"/>
    </location>
</feature>
<feature type="topological domain" description="Cytoplasmic" evidence="7">
    <location>
        <begin position="200"/>
        <end position="209"/>
    </location>
</feature>
<feature type="transmembrane region" description="Helical;Name=6" evidence="4">
    <location>
        <begin position="210"/>
        <end position="230"/>
    </location>
</feature>
<feature type="topological domain" description="Lumenal" evidence="7">
    <location>
        <begin position="231"/>
        <end position="234"/>
    </location>
</feature>
<feature type="transmembrane region" description="Helical;Name=7" evidence="4">
    <location>
        <begin position="235"/>
        <end position="255"/>
    </location>
</feature>
<feature type="topological domain" description="Cytoplasmic" evidence="7">
    <location>
        <begin position="256"/>
        <end position="298"/>
    </location>
</feature>
<feature type="region of interest" description="Disordered" evidence="5">
    <location>
        <begin position="260"/>
        <end position="298"/>
    </location>
</feature>
<feature type="compositionally biased region" description="Basic and acidic residues" evidence="5">
    <location>
        <begin position="280"/>
        <end position="289"/>
    </location>
</feature>
<feature type="binding site" evidence="2">
    <location>
        <position position="74"/>
    </location>
    <ligand>
        <name>Ca(2+)</name>
        <dbReference type="ChEBI" id="CHEBI:29108"/>
    </ligand>
</feature>
<feature type="binding site" evidence="3">
    <location>
        <position position="122"/>
    </location>
    <ligand>
        <name>a 1,2-diacyl-sn-glycero-3-phospho-(1D-myo-inositol-4,5-bisphosphate)</name>
        <dbReference type="ChEBI" id="CHEBI:58456"/>
    </ligand>
</feature>
<feature type="binding site" evidence="3">
    <location>
        <position position="126"/>
    </location>
    <ligand>
        <name>a 1,2-diacyl-sn-glycero-3-phospho-(1D-myo-inositol-4,5-bisphosphate)</name>
        <dbReference type="ChEBI" id="CHEBI:58456"/>
    </ligand>
</feature>
<feature type="sequence conflict" description="In Ref. 3; BAE38393." evidence="7" ref="3">
    <original>L</original>
    <variation>P</variation>
    <location>
        <position position="73"/>
    </location>
</feature>
<feature type="sequence conflict" description="In Ref. 2; ABS17665 and 3; BAE34290." evidence="7" ref="2 3">
    <original>G</original>
    <variation>S</variation>
    <location>
        <position position="276"/>
    </location>
</feature>